<gene>
    <name evidence="1" type="primary">fbp</name>
    <name type="ordered locus">BMA10247_0157</name>
</gene>
<feature type="chain" id="PRO_0000364492" description="Fructose-1,6-bisphosphatase class 1">
    <location>
        <begin position="1"/>
        <end position="338"/>
    </location>
</feature>
<feature type="binding site" evidence="1">
    <location>
        <position position="94"/>
    </location>
    <ligand>
        <name>Mg(2+)</name>
        <dbReference type="ChEBI" id="CHEBI:18420"/>
        <label>1</label>
    </ligand>
</feature>
<feature type="binding site" evidence="1">
    <location>
        <position position="116"/>
    </location>
    <ligand>
        <name>Mg(2+)</name>
        <dbReference type="ChEBI" id="CHEBI:18420"/>
        <label>1</label>
    </ligand>
</feature>
<feature type="binding site" evidence="1">
    <location>
        <position position="116"/>
    </location>
    <ligand>
        <name>Mg(2+)</name>
        <dbReference type="ChEBI" id="CHEBI:18420"/>
        <label>2</label>
    </ligand>
</feature>
<feature type="binding site" evidence="1">
    <location>
        <position position="118"/>
    </location>
    <ligand>
        <name>Mg(2+)</name>
        <dbReference type="ChEBI" id="CHEBI:18420"/>
        <label>1</label>
    </ligand>
</feature>
<feature type="binding site" evidence="1">
    <location>
        <begin position="119"/>
        <end position="122"/>
    </location>
    <ligand>
        <name>substrate</name>
    </ligand>
</feature>
<feature type="binding site" evidence="1">
    <location>
        <position position="119"/>
    </location>
    <ligand>
        <name>Mg(2+)</name>
        <dbReference type="ChEBI" id="CHEBI:18420"/>
        <label>2</label>
    </ligand>
</feature>
<feature type="binding site" evidence="1">
    <location>
        <position position="210"/>
    </location>
    <ligand>
        <name>substrate</name>
    </ligand>
</feature>
<feature type="binding site" evidence="1">
    <location>
        <position position="276"/>
    </location>
    <ligand>
        <name>substrate</name>
    </ligand>
</feature>
<feature type="binding site" evidence="1">
    <location>
        <position position="282"/>
    </location>
    <ligand>
        <name>Mg(2+)</name>
        <dbReference type="ChEBI" id="CHEBI:18420"/>
        <label>2</label>
    </ligand>
</feature>
<proteinExistence type="inferred from homology"/>
<protein>
    <recommendedName>
        <fullName evidence="1">Fructose-1,6-bisphosphatase class 1</fullName>
        <shortName evidence="1">FBPase class 1</shortName>
        <ecNumber evidence="1">3.1.3.11</ecNumber>
    </recommendedName>
    <alternativeName>
        <fullName evidence="1">D-fructose-1,6-bisphosphate 1-phosphohydrolase class 1</fullName>
    </alternativeName>
</protein>
<comment type="catalytic activity">
    <reaction evidence="1">
        <text>beta-D-fructose 1,6-bisphosphate + H2O = beta-D-fructose 6-phosphate + phosphate</text>
        <dbReference type="Rhea" id="RHEA:11064"/>
        <dbReference type="ChEBI" id="CHEBI:15377"/>
        <dbReference type="ChEBI" id="CHEBI:32966"/>
        <dbReference type="ChEBI" id="CHEBI:43474"/>
        <dbReference type="ChEBI" id="CHEBI:57634"/>
        <dbReference type="EC" id="3.1.3.11"/>
    </reaction>
</comment>
<comment type="cofactor">
    <cofactor evidence="1">
        <name>Mg(2+)</name>
        <dbReference type="ChEBI" id="CHEBI:18420"/>
    </cofactor>
    <text evidence="1">Binds 2 magnesium ions per subunit.</text>
</comment>
<comment type="pathway">
    <text evidence="1">Carbohydrate biosynthesis; gluconeogenesis.</text>
</comment>
<comment type="subunit">
    <text evidence="1">Homotetramer.</text>
</comment>
<comment type="subcellular location">
    <subcellularLocation>
        <location evidence="1">Cytoplasm</location>
    </subcellularLocation>
</comment>
<comment type="similarity">
    <text evidence="1">Belongs to the FBPase class 1 family.</text>
</comment>
<reference key="1">
    <citation type="journal article" date="2010" name="Genome Biol. Evol.">
        <title>Continuing evolution of Burkholderia mallei through genome reduction and large-scale rearrangements.</title>
        <authorList>
            <person name="Losada L."/>
            <person name="Ronning C.M."/>
            <person name="DeShazer D."/>
            <person name="Woods D."/>
            <person name="Fedorova N."/>
            <person name="Kim H.S."/>
            <person name="Shabalina S.A."/>
            <person name="Pearson T.R."/>
            <person name="Brinkac L."/>
            <person name="Tan P."/>
            <person name="Nandi T."/>
            <person name="Crabtree J."/>
            <person name="Badger J."/>
            <person name="Beckstrom-Sternberg S."/>
            <person name="Saqib M."/>
            <person name="Schutzer S.E."/>
            <person name="Keim P."/>
            <person name="Nierman W.C."/>
        </authorList>
    </citation>
    <scope>NUCLEOTIDE SEQUENCE [LARGE SCALE GENOMIC DNA]</scope>
    <source>
        <strain>NCTC 10247</strain>
    </source>
</reference>
<name>F16PA_BURM7</name>
<sequence length="338" mass="37377">MSITRRTTLSKYLIEQQRETHNLPADLRLLIEVVARACKAISYNVSKGALGDALGTAGSENVQGEVQKKLDILSNEILLDANEWGGNLAAMASEEMETFFPIPANYPRGEYLLVFDPLDGSSNIDVNVSIGTIFSVLRCPDGQQATEQSFLQPGTEQVAAGYAVYGPQTVFVLTTGNGVNCFTLDREVGSWVLTQSNLRIPEDTREYAINASNARHWYEPVKRYIDELNAGAEGPRGENFNMRWIASMVADVHRILNRGGIFMYPADKRTPDRPGKLRLMYEANPMSFIVEQAGGAATTGLKRILDVQPTGLHQRVPVILGSKNEVERVARYHEQAQS</sequence>
<keyword id="KW-0119">Carbohydrate metabolism</keyword>
<keyword id="KW-0963">Cytoplasm</keyword>
<keyword id="KW-0378">Hydrolase</keyword>
<keyword id="KW-0460">Magnesium</keyword>
<keyword id="KW-0479">Metal-binding</keyword>
<organism>
    <name type="scientific">Burkholderia mallei (strain NCTC 10247)</name>
    <dbReference type="NCBI Taxonomy" id="320389"/>
    <lineage>
        <taxon>Bacteria</taxon>
        <taxon>Pseudomonadati</taxon>
        <taxon>Pseudomonadota</taxon>
        <taxon>Betaproteobacteria</taxon>
        <taxon>Burkholderiales</taxon>
        <taxon>Burkholderiaceae</taxon>
        <taxon>Burkholderia</taxon>
        <taxon>pseudomallei group</taxon>
    </lineage>
</organism>
<evidence type="ECO:0000255" key="1">
    <source>
        <dbReference type="HAMAP-Rule" id="MF_01855"/>
    </source>
</evidence>
<accession>A3MHJ7</accession>
<dbReference type="EC" id="3.1.3.11" evidence="1"/>
<dbReference type="EMBL" id="CP000548">
    <property type="protein sequence ID" value="ABO04678.1"/>
    <property type="molecule type" value="Genomic_DNA"/>
</dbReference>
<dbReference type="RefSeq" id="WP_004189384.1">
    <property type="nucleotide sequence ID" value="NZ_CP007802.1"/>
</dbReference>
<dbReference type="SMR" id="A3MHJ7"/>
<dbReference type="KEGG" id="bmaz:BM44_2829"/>
<dbReference type="KEGG" id="bmn:BMA10247_0157"/>
<dbReference type="PATRIC" id="fig|320389.8.peg.3193"/>
<dbReference type="UniPathway" id="UPA00138"/>
<dbReference type="GO" id="GO:0005829">
    <property type="term" value="C:cytosol"/>
    <property type="evidence" value="ECO:0007669"/>
    <property type="project" value="TreeGrafter"/>
</dbReference>
<dbReference type="GO" id="GO:0042132">
    <property type="term" value="F:fructose 1,6-bisphosphate 1-phosphatase activity"/>
    <property type="evidence" value="ECO:0007669"/>
    <property type="project" value="UniProtKB-UniRule"/>
</dbReference>
<dbReference type="GO" id="GO:0000287">
    <property type="term" value="F:magnesium ion binding"/>
    <property type="evidence" value="ECO:0007669"/>
    <property type="project" value="UniProtKB-UniRule"/>
</dbReference>
<dbReference type="GO" id="GO:0030388">
    <property type="term" value="P:fructose 1,6-bisphosphate metabolic process"/>
    <property type="evidence" value="ECO:0007669"/>
    <property type="project" value="TreeGrafter"/>
</dbReference>
<dbReference type="GO" id="GO:0006002">
    <property type="term" value="P:fructose 6-phosphate metabolic process"/>
    <property type="evidence" value="ECO:0007669"/>
    <property type="project" value="TreeGrafter"/>
</dbReference>
<dbReference type="GO" id="GO:0006000">
    <property type="term" value="P:fructose metabolic process"/>
    <property type="evidence" value="ECO:0007669"/>
    <property type="project" value="TreeGrafter"/>
</dbReference>
<dbReference type="GO" id="GO:0006094">
    <property type="term" value="P:gluconeogenesis"/>
    <property type="evidence" value="ECO:0007669"/>
    <property type="project" value="UniProtKB-UniRule"/>
</dbReference>
<dbReference type="GO" id="GO:0005986">
    <property type="term" value="P:sucrose biosynthetic process"/>
    <property type="evidence" value="ECO:0007669"/>
    <property type="project" value="TreeGrafter"/>
</dbReference>
<dbReference type="CDD" id="cd00354">
    <property type="entry name" value="FBPase"/>
    <property type="match status" value="1"/>
</dbReference>
<dbReference type="FunFam" id="3.30.540.10:FF:000006">
    <property type="entry name" value="Fructose-1,6-bisphosphatase class 1"/>
    <property type="match status" value="1"/>
</dbReference>
<dbReference type="FunFam" id="3.40.190.80:FF:000011">
    <property type="entry name" value="Fructose-1,6-bisphosphatase class 1"/>
    <property type="match status" value="1"/>
</dbReference>
<dbReference type="Gene3D" id="3.40.190.80">
    <property type="match status" value="1"/>
</dbReference>
<dbReference type="Gene3D" id="3.30.540.10">
    <property type="entry name" value="Fructose-1,6-Bisphosphatase, subunit A, domain 1"/>
    <property type="match status" value="1"/>
</dbReference>
<dbReference type="HAMAP" id="MF_01855">
    <property type="entry name" value="FBPase_class1"/>
    <property type="match status" value="1"/>
</dbReference>
<dbReference type="InterPro" id="IPR044015">
    <property type="entry name" value="FBPase_C_dom"/>
</dbReference>
<dbReference type="InterPro" id="IPR000146">
    <property type="entry name" value="FBPase_class-1"/>
</dbReference>
<dbReference type="InterPro" id="IPR033391">
    <property type="entry name" value="FBPase_N"/>
</dbReference>
<dbReference type="InterPro" id="IPR028343">
    <property type="entry name" value="FBPtase"/>
</dbReference>
<dbReference type="NCBIfam" id="NF006778">
    <property type="entry name" value="PRK09293.1-1"/>
    <property type="match status" value="1"/>
</dbReference>
<dbReference type="NCBIfam" id="NF006779">
    <property type="entry name" value="PRK09293.1-3"/>
    <property type="match status" value="1"/>
</dbReference>
<dbReference type="NCBIfam" id="NF006780">
    <property type="entry name" value="PRK09293.1-4"/>
    <property type="match status" value="1"/>
</dbReference>
<dbReference type="PANTHER" id="PTHR11556">
    <property type="entry name" value="FRUCTOSE-1,6-BISPHOSPHATASE-RELATED"/>
    <property type="match status" value="1"/>
</dbReference>
<dbReference type="PANTHER" id="PTHR11556:SF35">
    <property type="entry name" value="SEDOHEPTULOSE-1,7-BISPHOSPHATASE, CHLOROPLASTIC"/>
    <property type="match status" value="1"/>
</dbReference>
<dbReference type="Pfam" id="PF00316">
    <property type="entry name" value="FBPase"/>
    <property type="match status" value="1"/>
</dbReference>
<dbReference type="Pfam" id="PF18913">
    <property type="entry name" value="FBPase_C"/>
    <property type="match status" value="1"/>
</dbReference>
<dbReference type="PIRSF" id="PIRSF500210">
    <property type="entry name" value="FBPtase"/>
    <property type="match status" value="1"/>
</dbReference>
<dbReference type="PIRSF" id="PIRSF000904">
    <property type="entry name" value="FBPtase_SBPase"/>
    <property type="match status" value="1"/>
</dbReference>
<dbReference type="PRINTS" id="PR00115">
    <property type="entry name" value="F16BPHPHTASE"/>
</dbReference>
<dbReference type="SUPFAM" id="SSF56655">
    <property type="entry name" value="Carbohydrate phosphatase"/>
    <property type="match status" value="1"/>
</dbReference>